<dbReference type="EC" id="5.4.99.27" evidence="1"/>
<dbReference type="EMBL" id="AE017261">
    <property type="protein sequence ID" value="AAT43090.1"/>
    <property type="molecule type" value="Genomic_DNA"/>
</dbReference>
<dbReference type="SMR" id="Q6L1R2"/>
<dbReference type="FunCoup" id="Q6L1R2">
    <property type="interactions" value="29"/>
</dbReference>
<dbReference type="STRING" id="263820.PTO0505"/>
<dbReference type="PaxDb" id="263820-PTO0505"/>
<dbReference type="KEGG" id="pto:PTO0505"/>
<dbReference type="PATRIC" id="fig|263820.9.peg.532"/>
<dbReference type="eggNOG" id="arCOG04252">
    <property type="taxonomic scope" value="Archaea"/>
</dbReference>
<dbReference type="HOGENOM" id="CLU_005281_4_1_2"/>
<dbReference type="InParanoid" id="Q6L1R2"/>
<dbReference type="OrthoDB" id="1798at2157"/>
<dbReference type="Proteomes" id="UP000000438">
    <property type="component" value="Chromosome"/>
</dbReference>
<dbReference type="GO" id="GO:0003723">
    <property type="term" value="F:RNA binding"/>
    <property type="evidence" value="ECO:0007669"/>
    <property type="project" value="InterPro"/>
</dbReference>
<dbReference type="GO" id="GO:0160150">
    <property type="term" value="F:tRNA pseudouridine(13) synthase activity"/>
    <property type="evidence" value="ECO:0007669"/>
    <property type="project" value="UniProtKB-EC"/>
</dbReference>
<dbReference type="GO" id="GO:0031119">
    <property type="term" value="P:tRNA pseudouridine synthesis"/>
    <property type="evidence" value="ECO:0007669"/>
    <property type="project" value="UniProtKB-UniRule"/>
</dbReference>
<dbReference type="CDD" id="cd02577">
    <property type="entry name" value="PSTD1"/>
    <property type="match status" value="1"/>
</dbReference>
<dbReference type="Gene3D" id="1.10.1510.30">
    <property type="match status" value="1"/>
</dbReference>
<dbReference type="Gene3D" id="3.30.70.3160">
    <property type="match status" value="1"/>
</dbReference>
<dbReference type="Gene3D" id="3.30.2350.20">
    <property type="entry name" value="TruD, catalytic domain"/>
    <property type="match status" value="1"/>
</dbReference>
<dbReference type="HAMAP" id="MF_01082">
    <property type="entry name" value="TruD"/>
    <property type="match status" value="1"/>
</dbReference>
<dbReference type="InterPro" id="IPR020103">
    <property type="entry name" value="PsdUridine_synth_cat_dom_sf"/>
</dbReference>
<dbReference type="InterPro" id="IPR001656">
    <property type="entry name" value="PsdUridine_synth_TruD"/>
</dbReference>
<dbReference type="InterPro" id="IPR020119">
    <property type="entry name" value="PsdUridine_synth_TruD_CS"/>
</dbReference>
<dbReference type="InterPro" id="IPR011760">
    <property type="entry name" value="PsdUridine_synth_TruD_insert"/>
</dbReference>
<dbReference type="InterPro" id="IPR042214">
    <property type="entry name" value="TruD_catalytic"/>
</dbReference>
<dbReference type="NCBIfam" id="TIGR00094">
    <property type="entry name" value="tRNA_TruD_broad"/>
    <property type="match status" value="1"/>
</dbReference>
<dbReference type="PANTHER" id="PTHR13326:SF21">
    <property type="entry name" value="PSEUDOURIDYLATE SYNTHASE PUS7L"/>
    <property type="match status" value="1"/>
</dbReference>
<dbReference type="PANTHER" id="PTHR13326">
    <property type="entry name" value="TRNA PSEUDOURIDINE SYNTHASE D"/>
    <property type="match status" value="1"/>
</dbReference>
<dbReference type="Pfam" id="PF01142">
    <property type="entry name" value="TruD"/>
    <property type="match status" value="1"/>
</dbReference>
<dbReference type="PIRSF" id="PIRSF037016">
    <property type="entry name" value="Pseudouridin_synth_euk_prd"/>
    <property type="match status" value="1"/>
</dbReference>
<dbReference type="SUPFAM" id="SSF55120">
    <property type="entry name" value="Pseudouridine synthase"/>
    <property type="match status" value="1"/>
</dbReference>
<dbReference type="PROSITE" id="PS50984">
    <property type="entry name" value="TRUD"/>
    <property type="match status" value="1"/>
</dbReference>
<dbReference type="PROSITE" id="PS01268">
    <property type="entry name" value="UPF0024"/>
    <property type="match status" value="1"/>
</dbReference>
<name>TRUD_PICTO</name>
<accession>Q6L1R2</accession>
<gene>
    <name evidence="1" type="primary">truD</name>
    <name type="ordered locus">PTO0505</name>
</gene>
<feature type="chain" id="PRO_0000152548" description="Probable tRNA pseudouridine synthase D">
    <location>
        <begin position="1"/>
        <end position="414"/>
    </location>
</feature>
<feature type="domain" description="TRUD" evidence="1">
    <location>
        <begin position="162"/>
        <end position="382"/>
    </location>
</feature>
<feature type="active site" description="Nucleophile" evidence="1">
    <location>
        <position position="90"/>
    </location>
</feature>
<proteinExistence type="inferred from homology"/>
<evidence type="ECO:0000255" key="1">
    <source>
        <dbReference type="HAMAP-Rule" id="MF_01082"/>
    </source>
</evidence>
<comment type="function">
    <text evidence="1">Could be responsible for synthesis of pseudouridine from uracil-13 in transfer RNAs.</text>
</comment>
<comment type="catalytic activity">
    <reaction evidence="1">
        <text>uridine(13) in tRNA = pseudouridine(13) in tRNA</text>
        <dbReference type="Rhea" id="RHEA:42540"/>
        <dbReference type="Rhea" id="RHEA-COMP:10105"/>
        <dbReference type="Rhea" id="RHEA-COMP:10106"/>
        <dbReference type="ChEBI" id="CHEBI:65314"/>
        <dbReference type="ChEBI" id="CHEBI:65315"/>
        <dbReference type="EC" id="5.4.99.27"/>
    </reaction>
</comment>
<comment type="similarity">
    <text evidence="1">Belongs to the pseudouridine synthase TruD family.</text>
</comment>
<reference key="1">
    <citation type="journal article" date="2004" name="Proc. Natl. Acad. Sci. U.S.A.">
        <title>Genome sequence of Picrophilus torridus and its implications for life around pH 0.</title>
        <authorList>
            <person name="Fuetterer O."/>
            <person name="Angelov A."/>
            <person name="Liesegang H."/>
            <person name="Gottschalk G."/>
            <person name="Schleper C."/>
            <person name="Schepers B."/>
            <person name="Dock C."/>
            <person name="Antranikian G."/>
            <person name="Liebl W."/>
        </authorList>
    </citation>
    <scope>NUCLEOTIDE SEQUENCE [LARGE SCALE GENOMIC DNA]</scope>
    <source>
        <strain>ATCC 700027 / DSM 9790 / JCM 10055 / NBRC 100828 / KAW 2/3</strain>
    </source>
</reference>
<sequence>MFYINIAYIFMDLGMYGYITKTEKLNGMIKSNPEDFIVEEIPFDIKKDDNGKYLIIKARLYDWDTNRFVMYLARHMNISRKRITYAGTKDKRAVTTQYFCINTDRMFSGSINGIEIIEQFRSNDIIKLGDLYGNRFLIKVDYPGDLEKDSSETLKEINEKGGFPNFFGVQRFGSMRSNTHYIGKMIIKGEYEKAADKYLYDDNFDTEEYRINYGKNMDAKNSLKEYPGNLTFERSILGAIASGNKSSAFNALPKNLSIMFVHAFQSYLFNKMLSERMKHVKDLKTVIEGDLLYNIDDYFNPDKKRLIEANRYNLEMLNNLSSMDKIRPVIPLPGFDTRMPDGLQRDIMLKVLEDENVSLQDFKIPGEYSYMSSSGDYRIISAKPINLKFPEKNKLDFILGRGIYATSFLREIIK</sequence>
<keyword id="KW-0413">Isomerase</keyword>
<keyword id="KW-0819">tRNA processing</keyword>
<protein>
    <recommendedName>
        <fullName evidence="1">Probable tRNA pseudouridine synthase D</fullName>
        <ecNumber evidence="1">5.4.99.27</ecNumber>
    </recommendedName>
    <alternativeName>
        <fullName evidence="1">tRNA pseudouridine(13) synthase</fullName>
    </alternativeName>
    <alternativeName>
        <fullName evidence="1">tRNA pseudouridylate synthase D</fullName>
    </alternativeName>
    <alternativeName>
        <fullName evidence="1">tRNA-uridine isomerase D</fullName>
    </alternativeName>
</protein>
<organism>
    <name type="scientific">Picrophilus torridus (strain ATCC 700027 / DSM 9790 / JCM 10055 / NBRC 100828 / KAW 2/3)</name>
    <dbReference type="NCBI Taxonomy" id="1122961"/>
    <lineage>
        <taxon>Archaea</taxon>
        <taxon>Methanobacteriati</taxon>
        <taxon>Thermoplasmatota</taxon>
        <taxon>Thermoplasmata</taxon>
        <taxon>Thermoplasmatales</taxon>
        <taxon>Picrophilaceae</taxon>
        <taxon>Picrophilus</taxon>
    </lineage>
</organism>